<dbReference type="EMBL" id="CP000016">
    <property type="protein sequence ID" value="AAZ40699.1"/>
    <property type="molecule type" value="Genomic_DNA"/>
</dbReference>
<dbReference type="RefSeq" id="WP_011282605.1">
    <property type="nucleotide sequence ID" value="NC_007292.1"/>
</dbReference>
<dbReference type="SMR" id="Q493Y5"/>
<dbReference type="STRING" id="291272.BPEN_051"/>
<dbReference type="KEGG" id="bpn:BPEN_051"/>
<dbReference type="eggNOG" id="COG0103">
    <property type="taxonomic scope" value="Bacteria"/>
</dbReference>
<dbReference type="HOGENOM" id="CLU_046483_2_1_6"/>
<dbReference type="OrthoDB" id="9803965at2"/>
<dbReference type="Proteomes" id="UP000007794">
    <property type="component" value="Chromosome"/>
</dbReference>
<dbReference type="GO" id="GO:0022627">
    <property type="term" value="C:cytosolic small ribosomal subunit"/>
    <property type="evidence" value="ECO:0007669"/>
    <property type="project" value="TreeGrafter"/>
</dbReference>
<dbReference type="GO" id="GO:0003723">
    <property type="term" value="F:RNA binding"/>
    <property type="evidence" value="ECO:0007669"/>
    <property type="project" value="TreeGrafter"/>
</dbReference>
<dbReference type="GO" id="GO:0003735">
    <property type="term" value="F:structural constituent of ribosome"/>
    <property type="evidence" value="ECO:0007669"/>
    <property type="project" value="InterPro"/>
</dbReference>
<dbReference type="GO" id="GO:0006412">
    <property type="term" value="P:translation"/>
    <property type="evidence" value="ECO:0007669"/>
    <property type="project" value="UniProtKB-UniRule"/>
</dbReference>
<dbReference type="FunFam" id="3.30.230.10:FF:000001">
    <property type="entry name" value="30S ribosomal protein S9"/>
    <property type="match status" value="1"/>
</dbReference>
<dbReference type="Gene3D" id="3.30.230.10">
    <property type="match status" value="1"/>
</dbReference>
<dbReference type="HAMAP" id="MF_00532_B">
    <property type="entry name" value="Ribosomal_uS9_B"/>
    <property type="match status" value="1"/>
</dbReference>
<dbReference type="InterPro" id="IPR020568">
    <property type="entry name" value="Ribosomal_Su5_D2-typ_SF"/>
</dbReference>
<dbReference type="InterPro" id="IPR000754">
    <property type="entry name" value="Ribosomal_uS9"/>
</dbReference>
<dbReference type="InterPro" id="IPR023035">
    <property type="entry name" value="Ribosomal_uS9_bac/plastid"/>
</dbReference>
<dbReference type="InterPro" id="IPR020574">
    <property type="entry name" value="Ribosomal_uS9_CS"/>
</dbReference>
<dbReference type="InterPro" id="IPR014721">
    <property type="entry name" value="Ribsml_uS5_D2-typ_fold_subgr"/>
</dbReference>
<dbReference type="NCBIfam" id="NF001099">
    <property type="entry name" value="PRK00132.1"/>
    <property type="match status" value="1"/>
</dbReference>
<dbReference type="PANTHER" id="PTHR21569">
    <property type="entry name" value="RIBOSOMAL PROTEIN S9"/>
    <property type="match status" value="1"/>
</dbReference>
<dbReference type="PANTHER" id="PTHR21569:SF1">
    <property type="entry name" value="SMALL RIBOSOMAL SUBUNIT PROTEIN US9M"/>
    <property type="match status" value="1"/>
</dbReference>
<dbReference type="Pfam" id="PF00380">
    <property type="entry name" value="Ribosomal_S9"/>
    <property type="match status" value="1"/>
</dbReference>
<dbReference type="SUPFAM" id="SSF54211">
    <property type="entry name" value="Ribosomal protein S5 domain 2-like"/>
    <property type="match status" value="1"/>
</dbReference>
<dbReference type="PROSITE" id="PS00360">
    <property type="entry name" value="RIBOSOMAL_S9"/>
    <property type="match status" value="1"/>
</dbReference>
<keyword id="KW-1185">Reference proteome</keyword>
<keyword id="KW-0687">Ribonucleoprotein</keyword>
<keyword id="KW-0689">Ribosomal protein</keyword>
<accession>Q493Y5</accession>
<sequence length="132" mass="15004">MNLNQYYGTGRRKTASARVFIKSGISNGRVIINKRTLDQYFPRNNTQSIIIRPLKITNLLDKLDIYITVKGGGISGQAGAICHGMTRALLQYDEKLRGVLRSVGLVTRDSREVERKKVGLRKARRRPQFSKR</sequence>
<proteinExistence type="inferred from homology"/>
<name>RS9_BLOPB</name>
<organism>
    <name type="scientific">Blochmanniella pennsylvanica (strain BPEN)</name>
    <dbReference type="NCBI Taxonomy" id="291272"/>
    <lineage>
        <taxon>Bacteria</taxon>
        <taxon>Pseudomonadati</taxon>
        <taxon>Pseudomonadota</taxon>
        <taxon>Gammaproteobacteria</taxon>
        <taxon>Enterobacterales</taxon>
        <taxon>Enterobacteriaceae</taxon>
        <taxon>ant endosymbionts</taxon>
        <taxon>Candidatus Blochmanniella</taxon>
    </lineage>
</organism>
<protein>
    <recommendedName>
        <fullName evidence="1">Small ribosomal subunit protein uS9</fullName>
    </recommendedName>
    <alternativeName>
        <fullName evidence="2">30S ribosomal protein S9</fullName>
    </alternativeName>
</protein>
<comment type="similarity">
    <text evidence="1">Belongs to the universal ribosomal protein uS9 family.</text>
</comment>
<reference key="1">
    <citation type="journal article" date="2005" name="Genome Res.">
        <title>Genome sequence of Blochmannia pennsylvanicus indicates parallel evolutionary trends among bacterial mutualists of insects.</title>
        <authorList>
            <person name="Degnan P.H."/>
            <person name="Lazarus A.B."/>
            <person name="Wernegreen J.J."/>
        </authorList>
    </citation>
    <scope>NUCLEOTIDE SEQUENCE [LARGE SCALE GENOMIC DNA]</scope>
    <source>
        <strain>BPEN</strain>
    </source>
</reference>
<evidence type="ECO:0000255" key="1">
    <source>
        <dbReference type="HAMAP-Rule" id="MF_00532"/>
    </source>
</evidence>
<evidence type="ECO:0000305" key="2"/>
<gene>
    <name evidence="1" type="primary">rpsI</name>
    <name type="ordered locus">BPEN_051</name>
</gene>
<feature type="chain" id="PRO_1000051171" description="Small ribosomal subunit protein uS9">
    <location>
        <begin position="1"/>
        <end position="132"/>
    </location>
</feature>